<feature type="chain" id="PRO_0000157898" description="Uncharacterized protein sll1895">
    <location>
        <begin position="1"/>
        <end position="696"/>
    </location>
</feature>
<feature type="domain" description="GGDEF" evidence="2">
    <location>
        <begin position="293"/>
        <end position="426"/>
    </location>
</feature>
<feature type="domain" description="EAL" evidence="1">
    <location>
        <begin position="435"/>
        <end position="689"/>
    </location>
</feature>
<gene>
    <name type="ordered locus">sll1895</name>
</gene>
<dbReference type="EMBL" id="BA000022">
    <property type="protein sequence ID" value="BAA18187.1"/>
    <property type="molecule type" value="Genomic_DNA"/>
</dbReference>
<dbReference type="PIR" id="S75626">
    <property type="entry name" value="S75626"/>
</dbReference>
<dbReference type="SMR" id="P74101"/>
<dbReference type="FunCoup" id="P74101">
    <property type="interactions" value="204"/>
</dbReference>
<dbReference type="STRING" id="1148.gene:10499060"/>
<dbReference type="PaxDb" id="1148-1653272"/>
<dbReference type="EnsemblBacteria" id="BAA18187">
    <property type="protein sequence ID" value="BAA18187"/>
    <property type="gene ID" value="BAA18187"/>
</dbReference>
<dbReference type="KEGG" id="syn:sll1895"/>
<dbReference type="eggNOG" id="COG1716">
    <property type="taxonomic scope" value="Bacteria"/>
</dbReference>
<dbReference type="eggNOG" id="COG5001">
    <property type="taxonomic scope" value="Bacteria"/>
</dbReference>
<dbReference type="InParanoid" id="P74101"/>
<dbReference type="PhylomeDB" id="P74101"/>
<dbReference type="Proteomes" id="UP000001425">
    <property type="component" value="Chromosome"/>
</dbReference>
<dbReference type="GO" id="GO:0005886">
    <property type="term" value="C:plasma membrane"/>
    <property type="evidence" value="ECO:0000318"/>
    <property type="project" value="GO_Central"/>
</dbReference>
<dbReference type="GO" id="GO:0071111">
    <property type="term" value="F:cyclic-guanylate-specific phosphodiesterase activity"/>
    <property type="evidence" value="ECO:0000318"/>
    <property type="project" value="GO_Central"/>
</dbReference>
<dbReference type="CDD" id="cd01948">
    <property type="entry name" value="EAL"/>
    <property type="match status" value="1"/>
</dbReference>
<dbReference type="CDD" id="cd22697">
    <property type="entry name" value="FHA_Slr1951-like"/>
    <property type="match status" value="1"/>
</dbReference>
<dbReference type="CDD" id="cd01949">
    <property type="entry name" value="GGDEF"/>
    <property type="match status" value="1"/>
</dbReference>
<dbReference type="Gene3D" id="2.60.200.20">
    <property type="match status" value="1"/>
</dbReference>
<dbReference type="Gene3D" id="3.30.70.270">
    <property type="match status" value="1"/>
</dbReference>
<dbReference type="Gene3D" id="3.20.20.450">
    <property type="entry name" value="EAL domain"/>
    <property type="match status" value="1"/>
</dbReference>
<dbReference type="InterPro" id="IPR050706">
    <property type="entry name" value="Cyclic-di-GMP_PDE-like"/>
</dbReference>
<dbReference type="InterPro" id="IPR001633">
    <property type="entry name" value="EAL_dom"/>
</dbReference>
<dbReference type="InterPro" id="IPR035919">
    <property type="entry name" value="EAL_sf"/>
</dbReference>
<dbReference type="InterPro" id="IPR000253">
    <property type="entry name" value="FHA_dom"/>
</dbReference>
<dbReference type="InterPro" id="IPR000160">
    <property type="entry name" value="GGDEF_dom"/>
</dbReference>
<dbReference type="InterPro" id="IPR029787">
    <property type="entry name" value="Nucleotide_cyclase"/>
</dbReference>
<dbReference type="InterPro" id="IPR043128">
    <property type="entry name" value="Rev_trsase/Diguanyl_cyclase"/>
</dbReference>
<dbReference type="InterPro" id="IPR008984">
    <property type="entry name" value="SMAD_FHA_dom_sf"/>
</dbReference>
<dbReference type="NCBIfam" id="TIGR00254">
    <property type="entry name" value="GGDEF"/>
    <property type="match status" value="1"/>
</dbReference>
<dbReference type="PANTHER" id="PTHR33121">
    <property type="entry name" value="CYCLIC DI-GMP PHOSPHODIESTERASE PDEF"/>
    <property type="match status" value="1"/>
</dbReference>
<dbReference type="PANTHER" id="PTHR33121:SF71">
    <property type="entry name" value="OXYGEN SENSOR PROTEIN DOSP"/>
    <property type="match status" value="1"/>
</dbReference>
<dbReference type="Pfam" id="PF00563">
    <property type="entry name" value="EAL"/>
    <property type="match status" value="1"/>
</dbReference>
<dbReference type="Pfam" id="PF00498">
    <property type="entry name" value="FHA"/>
    <property type="match status" value="1"/>
</dbReference>
<dbReference type="Pfam" id="PF00990">
    <property type="entry name" value="GGDEF"/>
    <property type="match status" value="1"/>
</dbReference>
<dbReference type="SMART" id="SM00052">
    <property type="entry name" value="EAL"/>
    <property type="match status" value="1"/>
</dbReference>
<dbReference type="SMART" id="SM00240">
    <property type="entry name" value="FHA"/>
    <property type="match status" value="1"/>
</dbReference>
<dbReference type="SMART" id="SM00267">
    <property type="entry name" value="GGDEF"/>
    <property type="match status" value="1"/>
</dbReference>
<dbReference type="SUPFAM" id="SSF141868">
    <property type="entry name" value="EAL domain-like"/>
    <property type="match status" value="1"/>
</dbReference>
<dbReference type="SUPFAM" id="SSF55073">
    <property type="entry name" value="Nucleotide cyclase"/>
    <property type="match status" value="1"/>
</dbReference>
<dbReference type="SUPFAM" id="SSF49879">
    <property type="entry name" value="SMAD/FHA domain"/>
    <property type="match status" value="1"/>
</dbReference>
<dbReference type="PROSITE" id="PS50883">
    <property type="entry name" value="EAL"/>
    <property type="match status" value="1"/>
</dbReference>
<dbReference type="PROSITE" id="PS50006">
    <property type="entry name" value="FHA_DOMAIN"/>
    <property type="match status" value="1"/>
</dbReference>
<dbReference type="PROSITE" id="PS50887">
    <property type="entry name" value="GGDEF"/>
    <property type="match status" value="1"/>
</dbReference>
<proteinExistence type="predicted"/>
<sequence length="696" mass="79671">MLYQLVVDSPSFKKVIRLQNSCYSIGRHPSNTIVIPSPQISRRHATLIKKINPNLDISFHIIDGDLEGHRSRNGVWVNGESHLDYELVHGDVIALSEDIQIFYQAIPTDPKDTISGGGDRQRLTPDLSEHFPQEQWDITLIGHEDDLSQLSHEKLSKLAACIEYSPYPMVEIDYFGNLTYLNTATKEKFPSIQKDSMAHPLLKDIIPQREDTPIYYLRTREVQIGDKFYEQHIHYPAESQFIRSYIFDITERKVIEQSIHYQAFYDPLTDLPNRFLFKQELGKVLSNVQNQSSVLGLVLLGFRELQSLNDLLGHSVADEVLKIITERLSAHVRLEDLLCRWRGDTFILLIQSCRNLDEIEVFVRRLLAVLKRPFFIANNPLYLQGYAGIACYPNHGDNVEILLNRVGIALNEVKDIGSRQYCFYEESMNSDHLERIQLEHALHQALERDEFLLYYQPIIDVQSGRLCGVEALIRWQHPIHGLVSPGLFIGLLETTGLIIPVGEWIMRTAFQHFHHWAPAVDDDFRIAINLSPQQFQAPDLLPTILRILAESSLPPHRLEVEITENIVMQNVTATQNLLNALQSHGIRLSMDDFGTGYSSLSYLKTFPFNTLKIDRSFTKDILHTPKDAAIIQAMLLLGNGFNLNIIAEGIEEEPQARCLYDLGCREMQGYWFSHPLSEAEITAFLAEGNFQRFCLG</sequence>
<organism>
    <name type="scientific">Synechocystis sp. (strain ATCC 27184 / PCC 6803 / Kazusa)</name>
    <dbReference type="NCBI Taxonomy" id="1111708"/>
    <lineage>
        <taxon>Bacteria</taxon>
        <taxon>Bacillati</taxon>
        <taxon>Cyanobacteriota</taxon>
        <taxon>Cyanophyceae</taxon>
        <taxon>Synechococcales</taxon>
        <taxon>Merismopediaceae</taxon>
        <taxon>Synechocystis</taxon>
    </lineage>
</organism>
<keyword id="KW-1185">Reference proteome</keyword>
<protein>
    <recommendedName>
        <fullName>Uncharacterized protein sll1895</fullName>
    </recommendedName>
</protein>
<name>Y1895_SYNY3</name>
<accession>P74101</accession>
<evidence type="ECO:0000255" key="1">
    <source>
        <dbReference type="PROSITE-ProRule" id="PRU00074"/>
    </source>
</evidence>
<evidence type="ECO:0000255" key="2">
    <source>
        <dbReference type="PROSITE-ProRule" id="PRU00095"/>
    </source>
</evidence>
<reference key="1">
    <citation type="journal article" date="1996" name="DNA Res.">
        <title>Sequence analysis of the genome of the unicellular cyanobacterium Synechocystis sp. strain PCC6803. II. Sequence determination of the entire genome and assignment of potential protein-coding regions.</title>
        <authorList>
            <person name="Kaneko T."/>
            <person name="Sato S."/>
            <person name="Kotani H."/>
            <person name="Tanaka A."/>
            <person name="Asamizu E."/>
            <person name="Nakamura Y."/>
            <person name="Miyajima N."/>
            <person name="Hirosawa M."/>
            <person name="Sugiura M."/>
            <person name="Sasamoto S."/>
            <person name="Kimura T."/>
            <person name="Hosouchi T."/>
            <person name="Matsuno A."/>
            <person name="Muraki A."/>
            <person name="Nakazaki N."/>
            <person name="Naruo K."/>
            <person name="Okumura S."/>
            <person name="Shimpo S."/>
            <person name="Takeuchi C."/>
            <person name="Wada T."/>
            <person name="Watanabe A."/>
            <person name="Yamada M."/>
            <person name="Yasuda M."/>
            <person name="Tabata S."/>
        </authorList>
    </citation>
    <scope>NUCLEOTIDE SEQUENCE [LARGE SCALE GENOMIC DNA]</scope>
    <source>
        <strain>ATCC 27184 / PCC 6803 / Kazusa</strain>
    </source>
</reference>